<sequence length="568" mass="63261">MPYATARSGDVMSSAAPPCCTSLLGLSLSMFVAPGTLTAAPLDAPVVNAPAPTPPTPDLAYPELFQAVQRGELFDDQKHFVDFLPLRDPALINADYLAQHDHPGFDLRKFVDANFEESPPVQTDAIRQDTALREHIDLLWPKLVRSQNHVPPHSSLLALPHPYVVPGGRFREVYYWDSYFTMLGLVKSGETTLSRQMLDNFAYLIDTYGHIPNGNRTYYLSRSQPPFFSYMVELQAGVEGEAVYQRYLPQLQKEYAYWMQGSDDLQPGQAARHVVRLADGSVLNRYWDERDTPRPEAWLHDTRTAAEVTDRPAAEVYRDLRAGAESGWDYTSRWLADGQNLRTIRTTAILPIDLNSLLYHLERTLALACAQPGAECTRDYAALAQQRKQAIDAHLWNTAGYYADYDWQTRTLSNQVTAAALYPLFAGLASDDHAKRTASTVRKTLLRPGGLATTAVKTGQQWDEPNGWAPLQWVAVDGLRRYGEDALARTIGERFLAQVQALFAREHKLVEKYGLETDAAGGGGGEYALQDGFGWTNGVTLMLLNLYPGKDTKAAPAKRVRKPEAAAR</sequence>
<dbReference type="EC" id="3.2.1.28" evidence="1"/>
<dbReference type="EMBL" id="AE008923">
    <property type="protein sequence ID" value="AAM35493.1"/>
    <property type="molecule type" value="Genomic_DNA"/>
</dbReference>
<dbReference type="SMR" id="Q8PPT1"/>
<dbReference type="CAZy" id="GH37">
    <property type="family name" value="Glycoside Hydrolase Family 37"/>
</dbReference>
<dbReference type="KEGG" id="xac:XAC0604"/>
<dbReference type="eggNOG" id="COG1626">
    <property type="taxonomic scope" value="Bacteria"/>
</dbReference>
<dbReference type="HOGENOM" id="CLU_006451_3_1_6"/>
<dbReference type="PHI-base" id="PHI:6630"/>
<dbReference type="Proteomes" id="UP000000576">
    <property type="component" value="Chromosome"/>
</dbReference>
<dbReference type="GO" id="GO:0042597">
    <property type="term" value="C:periplasmic space"/>
    <property type="evidence" value="ECO:0007669"/>
    <property type="project" value="UniProtKB-SubCell"/>
</dbReference>
<dbReference type="GO" id="GO:0004555">
    <property type="term" value="F:alpha,alpha-trehalase activity"/>
    <property type="evidence" value="ECO:0007669"/>
    <property type="project" value="UniProtKB-UniRule"/>
</dbReference>
<dbReference type="GO" id="GO:0071474">
    <property type="term" value="P:cellular hyperosmotic response"/>
    <property type="evidence" value="ECO:0007669"/>
    <property type="project" value="InterPro"/>
</dbReference>
<dbReference type="GO" id="GO:0005993">
    <property type="term" value="P:trehalose catabolic process"/>
    <property type="evidence" value="ECO:0007669"/>
    <property type="project" value="InterPro"/>
</dbReference>
<dbReference type="FunFam" id="1.50.10.10:FF:000003">
    <property type="entry name" value="Cytoplasmic trehalase"/>
    <property type="match status" value="1"/>
</dbReference>
<dbReference type="Gene3D" id="1.50.10.10">
    <property type="match status" value="1"/>
</dbReference>
<dbReference type="HAMAP" id="MF_01060">
    <property type="entry name" value="Peripl_trehalase"/>
    <property type="match status" value="1"/>
</dbReference>
<dbReference type="InterPro" id="IPR008928">
    <property type="entry name" value="6-hairpin_glycosidase_sf"/>
</dbReference>
<dbReference type="InterPro" id="IPR012341">
    <property type="entry name" value="6hp_glycosidase-like_sf"/>
</dbReference>
<dbReference type="InterPro" id="IPR001661">
    <property type="entry name" value="Glyco_hydro_37"/>
</dbReference>
<dbReference type="InterPro" id="IPR018232">
    <property type="entry name" value="Glyco_hydro_37_CS"/>
</dbReference>
<dbReference type="InterPro" id="IPR023720">
    <property type="entry name" value="Trehalase_periplasmic"/>
</dbReference>
<dbReference type="NCBIfam" id="NF009773">
    <property type="entry name" value="PRK13270.1"/>
    <property type="match status" value="1"/>
</dbReference>
<dbReference type="NCBIfam" id="NF009774">
    <property type="entry name" value="PRK13271.1"/>
    <property type="match status" value="1"/>
</dbReference>
<dbReference type="NCBIfam" id="NF009775">
    <property type="entry name" value="PRK13272.1"/>
    <property type="match status" value="1"/>
</dbReference>
<dbReference type="PANTHER" id="PTHR23403">
    <property type="entry name" value="TREHALASE"/>
    <property type="match status" value="1"/>
</dbReference>
<dbReference type="PANTHER" id="PTHR23403:SF1">
    <property type="entry name" value="TREHALASE"/>
    <property type="match status" value="1"/>
</dbReference>
<dbReference type="Pfam" id="PF01204">
    <property type="entry name" value="Trehalase"/>
    <property type="match status" value="1"/>
</dbReference>
<dbReference type="PRINTS" id="PR00744">
    <property type="entry name" value="GLHYDRLASE37"/>
</dbReference>
<dbReference type="SUPFAM" id="SSF48208">
    <property type="entry name" value="Six-hairpin glycosidases"/>
    <property type="match status" value="1"/>
</dbReference>
<dbReference type="PROSITE" id="PS00927">
    <property type="entry name" value="TREHALASE_1"/>
    <property type="match status" value="1"/>
</dbReference>
<dbReference type="PROSITE" id="PS00928">
    <property type="entry name" value="TREHALASE_2"/>
    <property type="match status" value="1"/>
</dbReference>
<gene>
    <name evidence="1" type="primary">treA</name>
    <name type="ordered locus">XAC0604</name>
</gene>
<feature type="signal peptide" evidence="1">
    <location>
        <begin position="1"/>
        <end position="39"/>
    </location>
</feature>
<feature type="chain" id="PRO_0000012049" description="Periplasmic trehalase">
    <location>
        <begin position="40"/>
        <end position="568"/>
    </location>
</feature>
<feature type="active site" description="Proton donor/acceptor" evidence="1">
    <location>
        <position position="329"/>
    </location>
</feature>
<feature type="active site" description="Proton donor/acceptor" evidence="1">
    <location>
        <position position="511"/>
    </location>
</feature>
<feature type="binding site" evidence="1">
    <location>
        <position position="169"/>
    </location>
    <ligand>
        <name>substrate</name>
    </ligand>
</feature>
<feature type="binding site" evidence="1">
    <location>
        <begin position="176"/>
        <end position="177"/>
    </location>
    <ligand>
        <name>substrate</name>
    </ligand>
</feature>
<feature type="binding site" evidence="1">
    <location>
        <position position="213"/>
    </location>
    <ligand>
        <name>substrate</name>
    </ligand>
</feature>
<feature type="binding site" evidence="1">
    <location>
        <begin position="222"/>
        <end position="224"/>
    </location>
    <ligand>
        <name>substrate</name>
    </ligand>
</feature>
<feature type="binding site" evidence="1">
    <location>
        <begin position="294"/>
        <end position="296"/>
    </location>
    <ligand>
        <name>substrate</name>
    </ligand>
</feature>
<feature type="binding site" evidence="1">
    <location>
        <position position="327"/>
    </location>
    <ligand>
        <name>substrate</name>
    </ligand>
</feature>
<feature type="binding site" evidence="1">
    <location>
        <position position="526"/>
    </location>
    <ligand>
        <name>substrate</name>
    </ligand>
</feature>
<organism>
    <name type="scientific">Xanthomonas axonopodis pv. citri (strain 306)</name>
    <dbReference type="NCBI Taxonomy" id="190486"/>
    <lineage>
        <taxon>Bacteria</taxon>
        <taxon>Pseudomonadati</taxon>
        <taxon>Pseudomonadota</taxon>
        <taxon>Gammaproteobacteria</taxon>
        <taxon>Lysobacterales</taxon>
        <taxon>Lysobacteraceae</taxon>
        <taxon>Xanthomonas</taxon>
    </lineage>
</organism>
<keyword id="KW-0326">Glycosidase</keyword>
<keyword id="KW-0378">Hydrolase</keyword>
<keyword id="KW-0574">Periplasm</keyword>
<keyword id="KW-0732">Signal</keyword>
<accession>Q8PPT1</accession>
<comment type="function">
    <text evidence="1">Provides the cells with the ability to utilize trehalose at high osmolarity by splitting it into glucose molecules that can subsequently be taken up by the phosphotransferase-mediated uptake system.</text>
</comment>
<comment type="catalytic activity">
    <reaction evidence="1">
        <text>alpha,alpha-trehalose + H2O = alpha-D-glucose + beta-D-glucose</text>
        <dbReference type="Rhea" id="RHEA:32675"/>
        <dbReference type="ChEBI" id="CHEBI:15377"/>
        <dbReference type="ChEBI" id="CHEBI:15903"/>
        <dbReference type="ChEBI" id="CHEBI:16551"/>
        <dbReference type="ChEBI" id="CHEBI:17925"/>
        <dbReference type="EC" id="3.2.1.28"/>
    </reaction>
</comment>
<comment type="subcellular location">
    <subcellularLocation>
        <location evidence="1">Periplasm</location>
    </subcellularLocation>
</comment>
<comment type="similarity">
    <text evidence="1">Belongs to the glycosyl hydrolase 37 family.</text>
</comment>
<evidence type="ECO:0000255" key="1">
    <source>
        <dbReference type="HAMAP-Rule" id="MF_01060"/>
    </source>
</evidence>
<proteinExistence type="inferred from homology"/>
<protein>
    <recommendedName>
        <fullName evidence="1">Periplasmic trehalase</fullName>
        <ecNumber evidence="1">3.2.1.28</ecNumber>
    </recommendedName>
    <alternativeName>
        <fullName evidence="1">Alpha,alpha-trehalase</fullName>
    </alternativeName>
    <alternativeName>
        <fullName evidence="1">Alpha,alpha-trehalose glucohydrolase</fullName>
    </alternativeName>
</protein>
<reference key="1">
    <citation type="journal article" date="2002" name="Nature">
        <title>Comparison of the genomes of two Xanthomonas pathogens with differing host specificities.</title>
        <authorList>
            <person name="da Silva A.C.R."/>
            <person name="Ferro J.A."/>
            <person name="Reinach F.C."/>
            <person name="Farah C.S."/>
            <person name="Furlan L.R."/>
            <person name="Quaggio R.B."/>
            <person name="Monteiro-Vitorello C.B."/>
            <person name="Van Sluys M.A."/>
            <person name="Almeida N.F. Jr."/>
            <person name="Alves L.M.C."/>
            <person name="do Amaral A.M."/>
            <person name="Bertolini M.C."/>
            <person name="Camargo L.E.A."/>
            <person name="Camarotte G."/>
            <person name="Cannavan F."/>
            <person name="Cardozo J."/>
            <person name="Chambergo F."/>
            <person name="Ciapina L.P."/>
            <person name="Cicarelli R.M.B."/>
            <person name="Coutinho L.L."/>
            <person name="Cursino-Santos J.R."/>
            <person name="El-Dorry H."/>
            <person name="Faria J.B."/>
            <person name="Ferreira A.J.S."/>
            <person name="Ferreira R.C.C."/>
            <person name="Ferro M.I.T."/>
            <person name="Formighieri E.F."/>
            <person name="Franco M.C."/>
            <person name="Greggio C.C."/>
            <person name="Gruber A."/>
            <person name="Katsuyama A.M."/>
            <person name="Kishi L.T."/>
            <person name="Leite R.P."/>
            <person name="Lemos E.G.M."/>
            <person name="Lemos M.V.F."/>
            <person name="Locali E.C."/>
            <person name="Machado M.A."/>
            <person name="Madeira A.M.B.N."/>
            <person name="Martinez-Rossi N.M."/>
            <person name="Martins E.C."/>
            <person name="Meidanis J."/>
            <person name="Menck C.F.M."/>
            <person name="Miyaki C.Y."/>
            <person name="Moon D.H."/>
            <person name="Moreira L.M."/>
            <person name="Novo M.T.M."/>
            <person name="Okura V.K."/>
            <person name="Oliveira M.C."/>
            <person name="Oliveira V.R."/>
            <person name="Pereira H.A."/>
            <person name="Rossi A."/>
            <person name="Sena J.A.D."/>
            <person name="Silva C."/>
            <person name="de Souza R.F."/>
            <person name="Spinola L.A.F."/>
            <person name="Takita M.A."/>
            <person name="Tamura R.E."/>
            <person name="Teixeira E.C."/>
            <person name="Tezza R.I.D."/>
            <person name="Trindade dos Santos M."/>
            <person name="Truffi D."/>
            <person name="Tsai S.M."/>
            <person name="White F.F."/>
            <person name="Setubal J.C."/>
            <person name="Kitajima J.P."/>
        </authorList>
    </citation>
    <scope>NUCLEOTIDE SEQUENCE [LARGE SCALE GENOMIC DNA]</scope>
    <source>
        <strain>306</strain>
    </source>
</reference>
<name>TREA_XANAC</name>